<proteinExistence type="inferred from homology"/>
<accession>B7N7S5</accession>
<dbReference type="EMBL" id="CU928163">
    <property type="protein sequence ID" value="CAR11275.1"/>
    <property type="molecule type" value="Genomic_DNA"/>
</dbReference>
<dbReference type="RefSeq" id="WP_000610901.1">
    <property type="nucleotide sequence ID" value="NC_011751.1"/>
</dbReference>
<dbReference type="RefSeq" id="YP_002410830.1">
    <property type="nucleotide sequence ID" value="NC_011751.1"/>
</dbReference>
<dbReference type="SMR" id="B7N7S5"/>
<dbReference type="STRING" id="585056.ECUMN_0052"/>
<dbReference type="GeneID" id="93777385"/>
<dbReference type="KEGG" id="eum:ECUMN_0052"/>
<dbReference type="PATRIC" id="fig|585056.7.peg.239"/>
<dbReference type="HOGENOM" id="CLU_128074_0_0_6"/>
<dbReference type="Proteomes" id="UP000007097">
    <property type="component" value="Chromosome"/>
</dbReference>
<dbReference type="GO" id="GO:0070987">
    <property type="term" value="P:error-free translesion synthesis"/>
    <property type="evidence" value="ECO:0007669"/>
    <property type="project" value="TreeGrafter"/>
</dbReference>
<dbReference type="Gene3D" id="2.60.40.1470">
    <property type="entry name" value="ApaG domain"/>
    <property type="match status" value="1"/>
</dbReference>
<dbReference type="HAMAP" id="MF_00791">
    <property type="entry name" value="ApaG"/>
    <property type="match status" value="1"/>
</dbReference>
<dbReference type="InterPro" id="IPR007474">
    <property type="entry name" value="ApaG_domain"/>
</dbReference>
<dbReference type="InterPro" id="IPR036767">
    <property type="entry name" value="ApaG_sf"/>
</dbReference>
<dbReference type="InterPro" id="IPR023065">
    <property type="entry name" value="Uncharacterised_ApaG"/>
</dbReference>
<dbReference type="NCBIfam" id="NF003967">
    <property type="entry name" value="PRK05461.1"/>
    <property type="match status" value="1"/>
</dbReference>
<dbReference type="PANTHER" id="PTHR14289">
    <property type="entry name" value="F-BOX ONLY PROTEIN 3"/>
    <property type="match status" value="1"/>
</dbReference>
<dbReference type="PANTHER" id="PTHR14289:SF16">
    <property type="entry name" value="POLYMERASE DELTA-INTERACTING PROTEIN 2"/>
    <property type="match status" value="1"/>
</dbReference>
<dbReference type="Pfam" id="PF04379">
    <property type="entry name" value="DUF525"/>
    <property type="match status" value="1"/>
</dbReference>
<dbReference type="SUPFAM" id="SSF110069">
    <property type="entry name" value="ApaG-like"/>
    <property type="match status" value="1"/>
</dbReference>
<dbReference type="PROSITE" id="PS51087">
    <property type="entry name" value="APAG"/>
    <property type="match status" value="1"/>
</dbReference>
<name>APAG_ECOLU</name>
<protein>
    <recommendedName>
        <fullName evidence="1">Protein ApaG</fullName>
    </recommendedName>
</protein>
<organism>
    <name type="scientific">Escherichia coli O17:K52:H18 (strain UMN026 / ExPEC)</name>
    <dbReference type="NCBI Taxonomy" id="585056"/>
    <lineage>
        <taxon>Bacteria</taxon>
        <taxon>Pseudomonadati</taxon>
        <taxon>Pseudomonadota</taxon>
        <taxon>Gammaproteobacteria</taxon>
        <taxon>Enterobacterales</taxon>
        <taxon>Enterobacteriaceae</taxon>
        <taxon>Escherichia</taxon>
    </lineage>
</organism>
<evidence type="ECO:0000255" key="1">
    <source>
        <dbReference type="HAMAP-Rule" id="MF_00791"/>
    </source>
</evidence>
<gene>
    <name evidence="1" type="primary">apaG</name>
    <name type="ordered locus">ECUMN_0052</name>
</gene>
<feature type="chain" id="PRO_1000133788" description="Protein ApaG">
    <location>
        <begin position="1"/>
        <end position="125"/>
    </location>
</feature>
<feature type="domain" description="ApaG" evidence="1">
    <location>
        <begin position="1"/>
        <end position="125"/>
    </location>
</feature>
<sequence length="125" mass="13867">MINSPRVCIQVQSVYIEAQSSPDNERYVFAYTVTIRNLGRAPVQLLGRYWLITNGNGRETEVQGEGVVGVQPLIAPGEEYQYTSGAIIETPLGTMQGHYEMIDENGVPFSIDIPVFRLAVPTLIH</sequence>
<reference key="1">
    <citation type="journal article" date="2009" name="PLoS Genet.">
        <title>Organised genome dynamics in the Escherichia coli species results in highly diverse adaptive paths.</title>
        <authorList>
            <person name="Touchon M."/>
            <person name="Hoede C."/>
            <person name="Tenaillon O."/>
            <person name="Barbe V."/>
            <person name="Baeriswyl S."/>
            <person name="Bidet P."/>
            <person name="Bingen E."/>
            <person name="Bonacorsi S."/>
            <person name="Bouchier C."/>
            <person name="Bouvet O."/>
            <person name="Calteau A."/>
            <person name="Chiapello H."/>
            <person name="Clermont O."/>
            <person name="Cruveiller S."/>
            <person name="Danchin A."/>
            <person name="Diard M."/>
            <person name="Dossat C."/>
            <person name="Karoui M.E."/>
            <person name="Frapy E."/>
            <person name="Garry L."/>
            <person name="Ghigo J.M."/>
            <person name="Gilles A.M."/>
            <person name="Johnson J."/>
            <person name="Le Bouguenec C."/>
            <person name="Lescat M."/>
            <person name="Mangenot S."/>
            <person name="Martinez-Jehanne V."/>
            <person name="Matic I."/>
            <person name="Nassif X."/>
            <person name="Oztas S."/>
            <person name="Petit M.A."/>
            <person name="Pichon C."/>
            <person name="Rouy Z."/>
            <person name="Ruf C.S."/>
            <person name="Schneider D."/>
            <person name="Tourret J."/>
            <person name="Vacherie B."/>
            <person name="Vallenet D."/>
            <person name="Medigue C."/>
            <person name="Rocha E.P.C."/>
            <person name="Denamur E."/>
        </authorList>
    </citation>
    <scope>NUCLEOTIDE SEQUENCE [LARGE SCALE GENOMIC DNA]</scope>
    <source>
        <strain>UMN026 / ExPEC</strain>
    </source>
</reference>